<evidence type="ECO:0000255" key="1">
    <source>
        <dbReference type="HAMAP-Rule" id="MF_01082"/>
    </source>
</evidence>
<dbReference type="EC" id="5.4.99.27" evidence="1"/>
<dbReference type="EMBL" id="FM180568">
    <property type="protein sequence ID" value="CAS10563.1"/>
    <property type="molecule type" value="Genomic_DNA"/>
</dbReference>
<dbReference type="RefSeq" id="WP_000568966.1">
    <property type="nucleotide sequence ID" value="NC_011601.1"/>
</dbReference>
<dbReference type="SMR" id="B7UHG4"/>
<dbReference type="KEGG" id="ecg:E2348C_3015"/>
<dbReference type="HOGENOM" id="CLU_005281_4_0_6"/>
<dbReference type="Proteomes" id="UP000008205">
    <property type="component" value="Chromosome"/>
</dbReference>
<dbReference type="GO" id="GO:0005829">
    <property type="term" value="C:cytosol"/>
    <property type="evidence" value="ECO:0007669"/>
    <property type="project" value="TreeGrafter"/>
</dbReference>
<dbReference type="GO" id="GO:0003723">
    <property type="term" value="F:RNA binding"/>
    <property type="evidence" value="ECO:0007669"/>
    <property type="project" value="InterPro"/>
</dbReference>
<dbReference type="GO" id="GO:0160150">
    <property type="term" value="F:tRNA pseudouridine(13) synthase activity"/>
    <property type="evidence" value="ECO:0007669"/>
    <property type="project" value="UniProtKB-EC"/>
</dbReference>
<dbReference type="GO" id="GO:0031119">
    <property type="term" value="P:tRNA pseudouridine synthesis"/>
    <property type="evidence" value="ECO:0007669"/>
    <property type="project" value="UniProtKB-UniRule"/>
</dbReference>
<dbReference type="CDD" id="cd02575">
    <property type="entry name" value="PseudoU_synth_EcTruD"/>
    <property type="match status" value="1"/>
</dbReference>
<dbReference type="FunFam" id="3.30.2340.10:FF:000001">
    <property type="entry name" value="tRNA pseudouridine synthase D"/>
    <property type="match status" value="1"/>
</dbReference>
<dbReference type="FunFam" id="3.30.2350.20:FF:000001">
    <property type="entry name" value="tRNA pseudouridine synthase D"/>
    <property type="match status" value="1"/>
</dbReference>
<dbReference type="Gene3D" id="3.30.2350.20">
    <property type="entry name" value="TruD, catalytic domain"/>
    <property type="match status" value="1"/>
</dbReference>
<dbReference type="Gene3D" id="3.30.2340.10">
    <property type="entry name" value="TruD, insertion domain"/>
    <property type="match status" value="1"/>
</dbReference>
<dbReference type="HAMAP" id="MF_01082">
    <property type="entry name" value="TruD"/>
    <property type="match status" value="1"/>
</dbReference>
<dbReference type="InterPro" id="IPR020103">
    <property type="entry name" value="PsdUridine_synth_cat_dom_sf"/>
</dbReference>
<dbReference type="InterPro" id="IPR001656">
    <property type="entry name" value="PsdUridine_synth_TruD"/>
</dbReference>
<dbReference type="InterPro" id="IPR020119">
    <property type="entry name" value="PsdUridine_synth_TruD_CS"/>
</dbReference>
<dbReference type="InterPro" id="IPR011760">
    <property type="entry name" value="PsdUridine_synth_TruD_insert"/>
</dbReference>
<dbReference type="InterPro" id="IPR042214">
    <property type="entry name" value="TruD_catalytic"/>
</dbReference>
<dbReference type="InterPro" id="IPR043165">
    <property type="entry name" value="TruD_insert_sf"/>
</dbReference>
<dbReference type="InterPro" id="IPR050170">
    <property type="entry name" value="TruD_pseudoU_synthase"/>
</dbReference>
<dbReference type="NCBIfam" id="NF002155">
    <property type="entry name" value="PRK00984.1-4"/>
    <property type="match status" value="1"/>
</dbReference>
<dbReference type="NCBIfam" id="TIGR00094">
    <property type="entry name" value="tRNA_TruD_broad"/>
    <property type="match status" value="1"/>
</dbReference>
<dbReference type="PANTHER" id="PTHR47811">
    <property type="entry name" value="TRNA PSEUDOURIDINE SYNTHASE D"/>
    <property type="match status" value="1"/>
</dbReference>
<dbReference type="PANTHER" id="PTHR47811:SF1">
    <property type="entry name" value="TRNA PSEUDOURIDINE SYNTHASE D"/>
    <property type="match status" value="1"/>
</dbReference>
<dbReference type="Pfam" id="PF01142">
    <property type="entry name" value="TruD"/>
    <property type="match status" value="2"/>
</dbReference>
<dbReference type="SUPFAM" id="SSF55120">
    <property type="entry name" value="Pseudouridine synthase"/>
    <property type="match status" value="1"/>
</dbReference>
<dbReference type="PROSITE" id="PS50984">
    <property type="entry name" value="TRUD"/>
    <property type="match status" value="1"/>
</dbReference>
<dbReference type="PROSITE" id="PS01268">
    <property type="entry name" value="UPF0024"/>
    <property type="match status" value="1"/>
</dbReference>
<proteinExistence type="inferred from homology"/>
<organism>
    <name type="scientific">Escherichia coli O127:H6 (strain E2348/69 / EPEC)</name>
    <dbReference type="NCBI Taxonomy" id="574521"/>
    <lineage>
        <taxon>Bacteria</taxon>
        <taxon>Pseudomonadati</taxon>
        <taxon>Pseudomonadota</taxon>
        <taxon>Gammaproteobacteria</taxon>
        <taxon>Enterobacterales</taxon>
        <taxon>Enterobacteriaceae</taxon>
        <taxon>Escherichia</taxon>
    </lineage>
</organism>
<protein>
    <recommendedName>
        <fullName evidence="1">tRNA pseudouridine synthase D</fullName>
        <ecNumber evidence="1">5.4.99.27</ecNumber>
    </recommendedName>
    <alternativeName>
        <fullName evidence="1">tRNA pseudouridine(13) synthase</fullName>
    </alternativeName>
    <alternativeName>
        <fullName evidence="1">tRNA pseudouridylate synthase D</fullName>
    </alternativeName>
    <alternativeName>
        <fullName evidence="1">tRNA-uridine isomerase D</fullName>
    </alternativeName>
</protein>
<reference key="1">
    <citation type="journal article" date="2009" name="J. Bacteriol.">
        <title>Complete genome sequence and comparative genome analysis of enteropathogenic Escherichia coli O127:H6 strain E2348/69.</title>
        <authorList>
            <person name="Iguchi A."/>
            <person name="Thomson N.R."/>
            <person name="Ogura Y."/>
            <person name="Saunders D."/>
            <person name="Ooka T."/>
            <person name="Henderson I.R."/>
            <person name="Harris D."/>
            <person name="Asadulghani M."/>
            <person name="Kurokawa K."/>
            <person name="Dean P."/>
            <person name="Kenny B."/>
            <person name="Quail M.A."/>
            <person name="Thurston S."/>
            <person name="Dougan G."/>
            <person name="Hayashi T."/>
            <person name="Parkhill J."/>
            <person name="Frankel G."/>
        </authorList>
    </citation>
    <scope>NUCLEOTIDE SEQUENCE [LARGE SCALE GENOMIC DNA]</scope>
    <source>
        <strain>E2348/69 / EPEC</strain>
    </source>
</reference>
<keyword id="KW-0413">Isomerase</keyword>
<keyword id="KW-1185">Reference proteome</keyword>
<keyword id="KW-0819">tRNA processing</keyword>
<sequence length="349" mass="39228">MIEFDNLTYLHGKPQGTGLLKANPEDFVVVEDLGFEPDGEGEHILVRILKNGCNTRFVADALAKFLKIHTREVSFAGQKDKHAVTEQWLCARVPGKEMPDLSAFQLEGCQVLQYARHKRKLRLGALKGNAFTLVLREVSNRDDVEQRLIDICVKGVPNYFGAQRFGIGGSNLQGALRWAQTNTPVRDRNKRSFWLSAARSAFFNQIVAERLKKADVNQVVDGDALQLAGRGSWFVATTEELAELQRRVNDKELMITAALPGSGEWGTQREALAFEQAAVAEETELQTLLVREKVEAARRAMLLYPQQLSWNWWDDVTVEIRFWLPAGSFATSVVRELINTTGDYAHIAE</sequence>
<accession>B7UHG4</accession>
<feature type="chain" id="PRO_1000149842" description="tRNA pseudouridine synthase D">
    <location>
        <begin position="1"/>
        <end position="349"/>
    </location>
</feature>
<feature type="domain" description="TRUD" evidence="1">
    <location>
        <begin position="155"/>
        <end position="303"/>
    </location>
</feature>
<feature type="active site" description="Nucleophile" evidence="1">
    <location>
        <position position="80"/>
    </location>
</feature>
<feature type="binding site" evidence="1">
    <location>
        <position position="27"/>
    </location>
    <ligand>
        <name>substrate</name>
    </ligand>
</feature>
<feature type="binding site" evidence="1">
    <location>
        <position position="129"/>
    </location>
    <ligand>
        <name>substrate</name>
    </ligand>
</feature>
<feature type="binding site" evidence="1">
    <location>
        <position position="329"/>
    </location>
    <ligand>
        <name>substrate</name>
    </ligand>
</feature>
<comment type="function">
    <text evidence="1">Responsible for synthesis of pseudouridine from uracil-13 in transfer RNAs.</text>
</comment>
<comment type="catalytic activity">
    <reaction evidence="1">
        <text>uridine(13) in tRNA = pseudouridine(13) in tRNA</text>
        <dbReference type="Rhea" id="RHEA:42540"/>
        <dbReference type="Rhea" id="RHEA-COMP:10105"/>
        <dbReference type="Rhea" id="RHEA-COMP:10106"/>
        <dbReference type="ChEBI" id="CHEBI:65314"/>
        <dbReference type="ChEBI" id="CHEBI:65315"/>
        <dbReference type="EC" id="5.4.99.27"/>
    </reaction>
</comment>
<comment type="similarity">
    <text evidence="1">Belongs to the pseudouridine synthase TruD family.</text>
</comment>
<gene>
    <name evidence="1" type="primary">truD</name>
    <name type="ordered locus">E2348C_3015</name>
</gene>
<name>TRUD_ECO27</name>